<comment type="function">
    <text evidence="3 4">Involved in the biosynthesis of cannabinoids-related terpenophenolic natural products, which have pharmacological activity (PubMed:22802619). Polyketide cyclase which functions in concert with OLS/TKS to form olivetolic acid (PubMed:22802619, PubMed:26783002). Has no intrinsic polyketide synthase activity and requires the presence of OLS to produce olivetolic acid (PubMed:22802619).</text>
</comment>
<comment type="catalytic activity">
    <reaction evidence="3 4">
        <text>3,5,7-trioxododecanoyl-CoA = olivetolate + CoA + H(+)</text>
        <dbReference type="Rhea" id="RHEA:34123"/>
        <dbReference type="ChEBI" id="CHEBI:15378"/>
        <dbReference type="ChEBI" id="CHEBI:57287"/>
        <dbReference type="ChEBI" id="CHEBI:66950"/>
        <dbReference type="ChEBI" id="CHEBI:66957"/>
        <dbReference type="EC" id="4.4.1.26"/>
    </reaction>
    <physiologicalReaction direction="left-to-right" evidence="3 4">
        <dbReference type="Rhea" id="RHEA:34124"/>
    </physiologicalReaction>
</comment>
<comment type="pathway">
    <text evidence="6">Secondary metabolite biosynthesis; terpenoid biosynthesis.</text>
</comment>
<comment type="subunit">
    <text evidence="3">Homodimer.</text>
</comment>
<comment type="subcellular location">
    <subcellularLocation>
        <location evidence="3">Cytoplasm</location>
    </subcellularLocation>
</comment>
<comment type="tissue specificity">
    <text evidence="3">Expressed in glandular trichomes and at lower levels in female flowers.</text>
</comment>
<keyword id="KW-0002">3D-structure</keyword>
<keyword id="KW-0963">Cytoplasm</keyword>
<keyword id="KW-0456">Lyase</keyword>
<keyword id="KW-0460">Magnesium</keyword>
<keyword id="KW-0479">Metal-binding</keyword>
<proteinExistence type="evidence at protein level"/>
<gene>
    <name evidence="5" type="primary">OAC</name>
</gene>
<dbReference type="EC" id="4.4.1.26" evidence="3 4"/>
<dbReference type="EMBL" id="JN679224">
    <property type="protein sequence ID" value="AFN42527.1"/>
    <property type="molecule type" value="mRNA"/>
</dbReference>
<dbReference type="PDB" id="5B08">
    <property type="method" value="X-ray"/>
    <property type="resolution" value="1.32 A"/>
    <property type="chains" value="A/B=1-101"/>
</dbReference>
<dbReference type="PDB" id="5B09">
    <property type="method" value="X-ray"/>
    <property type="resolution" value="1.70 A"/>
    <property type="chains" value="A=1-101"/>
</dbReference>
<dbReference type="PDB" id="5B0A">
    <property type="method" value="X-ray"/>
    <property type="resolution" value="2.10 A"/>
    <property type="chains" value="A/B=1-101"/>
</dbReference>
<dbReference type="PDB" id="5B0B">
    <property type="method" value="X-ray"/>
    <property type="resolution" value="2.19 A"/>
    <property type="chains" value="A/B/C/D=1-101"/>
</dbReference>
<dbReference type="PDB" id="5B0C">
    <property type="method" value="X-ray"/>
    <property type="resolution" value="1.60 A"/>
    <property type="chains" value="A/B=1-101"/>
</dbReference>
<dbReference type="PDB" id="5B0D">
    <property type="method" value="X-ray"/>
    <property type="resolution" value="1.80 A"/>
    <property type="chains" value="A/B=1-101"/>
</dbReference>
<dbReference type="PDB" id="5B0E">
    <property type="method" value="X-ray"/>
    <property type="resolution" value="1.60 A"/>
    <property type="chains" value="A/B=1-101"/>
</dbReference>
<dbReference type="PDB" id="5B0F">
    <property type="method" value="X-ray"/>
    <property type="resolution" value="1.60 A"/>
    <property type="chains" value="A/B=1-101"/>
</dbReference>
<dbReference type="PDB" id="5B0G">
    <property type="method" value="X-ray"/>
    <property type="resolution" value="1.40 A"/>
    <property type="chains" value="A=1-101"/>
</dbReference>
<dbReference type="PDB" id="7W6D">
    <property type="method" value="X-ray"/>
    <property type="resolution" value="1.54 A"/>
    <property type="chains" value="A/B=1-101"/>
</dbReference>
<dbReference type="PDB" id="7W6E">
    <property type="method" value="X-ray"/>
    <property type="resolution" value="1.38 A"/>
    <property type="chains" value="A/B=1-101"/>
</dbReference>
<dbReference type="PDB" id="7W6F">
    <property type="method" value="X-ray"/>
    <property type="resolution" value="1.58 A"/>
    <property type="chains" value="A/B=1-101"/>
</dbReference>
<dbReference type="PDBsum" id="5B08"/>
<dbReference type="PDBsum" id="5B09"/>
<dbReference type="PDBsum" id="5B0A"/>
<dbReference type="PDBsum" id="5B0B"/>
<dbReference type="PDBsum" id="5B0C"/>
<dbReference type="PDBsum" id="5B0D"/>
<dbReference type="PDBsum" id="5B0E"/>
<dbReference type="PDBsum" id="5B0F"/>
<dbReference type="PDBsum" id="5B0G"/>
<dbReference type="PDBsum" id="7W6D"/>
<dbReference type="PDBsum" id="7W6E"/>
<dbReference type="PDBsum" id="7W6F"/>
<dbReference type="SMR" id="I6WU39"/>
<dbReference type="EnsemblPlants" id="novel_model_6007_5bd9a17a">
    <property type="protein sequence ID" value="cds.novel_model_6007_5bd9a17a"/>
    <property type="gene ID" value="novel_gene_3079_5bd9a17a"/>
</dbReference>
<dbReference type="EnsemblPlants" id="novel_model_6008_5bd9a17a.2.5bd9b13b">
    <property type="protein sequence ID" value="cds.novel_model_6008_5bd9a17a.2.5bd9b13b"/>
    <property type="gene ID" value="novel_gene_3079_5bd9a17a"/>
</dbReference>
<dbReference type="EnsemblPlants" id="novel_model_6009_5bd9a17a.1.5bd9b13b">
    <property type="protein sequence ID" value="cds.novel_model_6009_5bd9a17a.1.5bd9b13b"/>
    <property type="gene ID" value="novel_gene_3079_5bd9a17a"/>
</dbReference>
<dbReference type="Gramene" id="novel_model_6007_5bd9a17a">
    <property type="protein sequence ID" value="cds.novel_model_6007_5bd9a17a"/>
    <property type="gene ID" value="novel_gene_3079_5bd9a17a"/>
</dbReference>
<dbReference type="Gramene" id="novel_model_6008_5bd9a17a.2.5bd9b13b">
    <property type="protein sequence ID" value="cds.novel_model_6008_5bd9a17a.2.5bd9b13b"/>
    <property type="gene ID" value="novel_gene_3079_5bd9a17a"/>
</dbReference>
<dbReference type="Gramene" id="novel_model_6009_5bd9a17a.1.5bd9b13b">
    <property type="protein sequence ID" value="cds.novel_model_6009_5bd9a17a.1.5bd9b13b"/>
    <property type="gene ID" value="novel_gene_3079_5bd9a17a"/>
</dbReference>
<dbReference type="KEGG" id="ag:AFN42527"/>
<dbReference type="OMA" id="FYPINPA"/>
<dbReference type="OrthoDB" id="1601230at2759"/>
<dbReference type="BioCyc" id="MetaCyc:MONOMER-17640"/>
<dbReference type="BRENDA" id="4.4.1.26">
    <property type="organism ID" value="1159"/>
</dbReference>
<dbReference type="UniPathway" id="UPA00213"/>
<dbReference type="EvolutionaryTrace" id="I6WU39"/>
<dbReference type="Proteomes" id="UP000596661">
    <property type="component" value="Chromosome 7"/>
</dbReference>
<dbReference type="GO" id="GO:0005737">
    <property type="term" value="C:cytoplasm"/>
    <property type="evidence" value="ECO:0007669"/>
    <property type="project" value="UniProtKB-SubCell"/>
</dbReference>
<dbReference type="GO" id="GO:0009975">
    <property type="term" value="F:cyclase activity"/>
    <property type="evidence" value="ECO:0000314"/>
    <property type="project" value="UniProtKB"/>
</dbReference>
<dbReference type="GO" id="GO:0016829">
    <property type="term" value="F:lyase activity"/>
    <property type="evidence" value="ECO:0007669"/>
    <property type="project" value="UniProtKB-KW"/>
</dbReference>
<dbReference type="GO" id="GO:0046872">
    <property type="term" value="F:metal ion binding"/>
    <property type="evidence" value="ECO:0007669"/>
    <property type="project" value="UniProtKB-KW"/>
</dbReference>
<dbReference type="GO" id="GO:1901696">
    <property type="term" value="P:cannabinoid biosynthetic process"/>
    <property type="evidence" value="ECO:0000314"/>
    <property type="project" value="UniProtKB"/>
</dbReference>
<dbReference type="GO" id="GO:1901697">
    <property type="term" value="P:olivetolic acid biosynthetic process"/>
    <property type="evidence" value="ECO:0000314"/>
    <property type="project" value="UniProtKB"/>
</dbReference>
<dbReference type="GO" id="GO:0009865">
    <property type="term" value="P:pollen tube adhesion"/>
    <property type="evidence" value="ECO:0007669"/>
    <property type="project" value="TreeGrafter"/>
</dbReference>
<dbReference type="GO" id="GO:0016114">
    <property type="term" value="P:terpenoid biosynthetic process"/>
    <property type="evidence" value="ECO:0007669"/>
    <property type="project" value="UniProtKB-UniPathway"/>
</dbReference>
<dbReference type="Gene3D" id="3.30.70.100">
    <property type="match status" value="1"/>
</dbReference>
<dbReference type="InterPro" id="IPR013097">
    <property type="entry name" value="Dabb"/>
</dbReference>
<dbReference type="InterPro" id="IPR011008">
    <property type="entry name" value="Dimeric_a/b-barrel"/>
</dbReference>
<dbReference type="InterPro" id="IPR044662">
    <property type="entry name" value="HS1/DABB1-like"/>
</dbReference>
<dbReference type="PANTHER" id="PTHR33178">
    <property type="match status" value="1"/>
</dbReference>
<dbReference type="PANTHER" id="PTHR33178:SF10">
    <property type="entry name" value="STRESS-RESPONSE A_B BARREL DOMAIN-CONTAINING PROTEIN"/>
    <property type="match status" value="1"/>
</dbReference>
<dbReference type="Pfam" id="PF07876">
    <property type="entry name" value="Dabb"/>
    <property type="match status" value="1"/>
</dbReference>
<dbReference type="SMART" id="SM00886">
    <property type="entry name" value="Dabb"/>
    <property type="match status" value="1"/>
</dbReference>
<dbReference type="SUPFAM" id="SSF54909">
    <property type="entry name" value="Dimeric alpha+beta barrel"/>
    <property type="match status" value="1"/>
</dbReference>
<dbReference type="PROSITE" id="PS51502">
    <property type="entry name" value="S_R_A_B_BARREL"/>
    <property type="match status" value="1"/>
</dbReference>
<name>OLIAC_CANSA</name>
<organism>
    <name type="scientific">Cannabis sativa</name>
    <name type="common">Hemp</name>
    <name type="synonym">Marijuana</name>
    <dbReference type="NCBI Taxonomy" id="3483"/>
    <lineage>
        <taxon>Eukaryota</taxon>
        <taxon>Viridiplantae</taxon>
        <taxon>Streptophyta</taxon>
        <taxon>Embryophyta</taxon>
        <taxon>Tracheophyta</taxon>
        <taxon>Spermatophyta</taxon>
        <taxon>Magnoliopsida</taxon>
        <taxon>eudicotyledons</taxon>
        <taxon>Gunneridae</taxon>
        <taxon>Pentapetalae</taxon>
        <taxon>rosids</taxon>
        <taxon>fabids</taxon>
        <taxon>Rosales</taxon>
        <taxon>Cannabaceae</taxon>
        <taxon>Cannabis</taxon>
    </lineage>
</organism>
<reference key="1">
    <citation type="journal article" date="2012" name="Proc. Natl. Acad. Sci. U.S.A.">
        <title>Identification of olivetolic acid cyclase from Cannabis sativa reveals a unique catalytic route to plant polyketides.</title>
        <authorList>
            <person name="Gagne S.J."/>
            <person name="Stout J.M."/>
            <person name="Liu E."/>
            <person name="Boubakir Z."/>
            <person name="Clark S.M."/>
            <person name="Page J.E."/>
        </authorList>
    </citation>
    <scope>NUCLEOTIDE SEQUENCE [MRNA]</scope>
    <scope>FUNCTION</scope>
    <scope>CATALYTIC ACTIVITY</scope>
    <scope>TISSUE SPECIFICITY</scope>
    <scope>SUBCELLULAR LOCATION</scope>
    <scope>3D-STRUCTURE MODELING</scope>
    <scope>SUBUNIT</scope>
    <scope>MUTAGENESIS OF LYS-4; HIS-5; LYS-12; LYS-38; ASP-45; HIS-57; HIS-75; HIS-78 AND ASP-96</scope>
    <source>
        <strain>cv. Finola</strain>
    </source>
</reference>
<reference key="2">
    <citation type="journal article" date="2007" name="Chem. Biodivers.">
        <title>Phytocannabinoids in Cannabis sativa: recent studies on biosynthetic enzymes.</title>
        <authorList>
            <person name="Taura F."/>
            <person name="Sirikantaramas S."/>
            <person name="Shoyama Y."/>
            <person name="Shoyama Y."/>
            <person name="Morimoto S."/>
        </authorList>
    </citation>
    <scope>REVIEW</scope>
</reference>
<reference key="3">
    <citation type="journal article" date="2019" name="Nat. Prod. Rep.">
        <title>Non-volatile natural products in plant glandular trichomes: chemistry, biological activities and biosynthesis.</title>
        <authorList>
            <person name="Liu Y."/>
            <person name="Jing S.-X."/>
            <person name="Luo S.-H."/>
            <person name="Li S.-H."/>
        </authorList>
    </citation>
    <scope>PATHWAY</scope>
    <scope>REVIEW</scope>
</reference>
<reference key="4">
    <citation type="journal article" date="2016" name="FEBS J.">
        <title>Structural basis for olivetolic acid formation by a polyketide cyclase from Cannabis sativa.</title>
        <authorList>
            <person name="Yang X."/>
            <person name="Matsui T."/>
            <person name="Kodama T."/>
            <person name="Mori T."/>
            <person name="Zhou X."/>
            <person name="Taura F."/>
            <person name="Noguchi H."/>
            <person name="Abe I."/>
            <person name="Morita H."/>
        </authorList>
    </citation>
    <scope>X-RAY CRYSTALLOGRAPHY (1.32 ANGSTROMS) IN COMPLEX WITH SUBSTRATE ANALOG</scope>
    <scope>FUNCTION</scope>
    <scope>CATALYTIC ACTIVITY</scope>
    <scope>MUTAGENESIS OF HIS-5; ILE-7; PHE-24; TYR-27; VAL-59; TYR-72; HIS-75 AND HIS-78</scope>
</reference>
<feature type="chain" id="PRO_0000421155" description="Olivetolic acid cyclase">
    <location>
        <begin position="1"/>
        <end position="101"/>
    </location>
</feature>
<feature type="domain" description="Stress-response A/B barrel" evidence="2">
    <location>
        <begin position="3"/>
        <end position="97"/>
    </location>
</feature>
<feature type="active site" description="Acid/base catalyst" evidence="4">
    <location>
        <position position="72"/>
    </location>
</feature>
<feature type="active site" description="Acid/base catalyst" evidence="4">
    <location>
        <position position="75"/>
    </location>
</feature>
<feature type="binding site" evidence="4 7">
    <location>
        <position position="5"/>
    </location>
    <ligand>
        <name>3,5,7-trioxododecanoyl-CoA</name>
        <dbReference type="ChEBI" id="CHEBI:66957"/>
    </ligand>
</feature>
<feature type="binding site" evidence="1">
    <location>
        <position position="31"/>
    </location>
    <ligand>
        <name>Mg(2+)</name>
        <dbReference type="ChEBI" id="CHEBI:18420"/>
    </ligand>
</feature>
<feature type="binding site" evidence="1">
    <location>
        <position position="34"/>
    </location>
    <ligand>
        <name>Mg(2+)</name>
        <dbReference type="ChEBI" id="CHEBI:18420"/>
    </ligand>
</feature>
<feature type="binding site" evidence="1">
    <location>
        <position position="37"/>
    </location>
    <ligand>
        <name>Mg(2+)</name>
        <dbReference type="ChEBI" id="CHEBI:18420"/>
    </ligand>
</feature>
<feature type="binding site" evidence="4 7">
    <location>
        <position position="72"/>
    </location>
    <ligand>
        <name>3,5,7-trioxododecanoyl-CoA</name>
        <dbReference type="ChEBI" id="CHEBI:66957"/>
    </ligand>
</feature>
<feature type="mutagenesis site" description="No effect." evidence="3">
    <original>K</original>
    <variation>A</variation>
    <location>
        <position position="4"/>
    </location>
</feature>
<feature type="mutagenesis site" description="Total loss of activity." evidence="3 4">
    <original>H</original>
    <variation>A</variation>
    <location>
        <position position="5"/>
    </location>
</feature>
<feature type="mutagenesis site" description="Reduced activity." evidence="4">
    <original>H</original>
    <variation>L</variation>
    <variation>Q</variation>
    <variation>S</variation>
    <location>
        <position position="5"/>
    </location>
</feature>
<feature type="mutagenesis site" description="Slightly reduced activity." evidence="4">
    <original>I</original>
    <variation>L</variation>
    <variation>F</variation>
    <location>
        <position position="7"/>
    </location>
</feature>
<feature type="mutagenesis site" description="No effect." evidence="3">
    <original>K</original>
    <variation>A</variation>
    <location>
        <position position="12"/>
    </location>
</feature>
<feature type="mutagenesis site" description="Reduced activity." evidence="4">
    <original>F</original>
    <variation>L</variation>
    <location>
        <position position="24"/>
    </location>
</feature>
<feature type="mutagenesis site" description="Increased activity." evidence="4">
    <original>Y</original>
    <variation>F</variation>
    <location>
        <position position="27"/>
    </location>
</feature>
<feature type="mutagenesis site" description="Reduced activity." evidence="4">
    <original>Y</original>
    <variation>L</variation>
    <variation>M</variation>
    <variation>W</variation>
    <location>
        <position position="27"/>
    </location>
</feature>
<feature type="mutagenesis site" description="No effect." evidence="3">
    <original>K</original>
    <variation>A</variation>
    <location>
        <position position="38"/>
    </location>
</feature>
<feature type="mutagenesis site" description="No effect." evidence="3">
    <original>D</original>
    <variation>A</variation>
    <location>
        <position position="45"/>
    </location>
</feature>
<feature type="mutagenesis site" description="Total loss of activity." evidence="3">
    <original>H</original>
    <variation>A</variation>
    <location>
        <position position="57"/>
    </location>
</feature>
<feature type="mutagenesis site" description="Slightly reduced activity." evidence="4">
    <original>V</original>
    <variation>M</variation>
    <location>
        <position position="59"/>
    </location>
</feature>
<feature type="mutagenesis site" description="Total loss of activity." evidence="4">
    <original>Y</original>
    <variation>F</variation>
    <location>
        <position position="72"/>
    </location>
</feature>
<feature type="mutagenesis site" description="99% loss of activity." evidence="3 4">
    <original>H</original>
    <variation>A</variation>
    <location>
        <position position="75"/>
    </location>
</feature>
<feature type="mutagenesis site" description="Total loss of activity." evidence="3 4">
    <original>H</original>
    <variation>A</variation>
    <variation>N</variation>
    <variation>Q</variation>
    <variation>S</variation>
    <location>
        <position position="78"/>
    </location>
</feature>
<feature type="mutagenesis site" description="No effect." evidence="3">
    <original>D</original>
    <variation>A</variation>
    <location>
        <position position="96"/>
    </location>
</feature>
<feature type="strand" evidence="8">
    <location>
        <begin position="3"/>
        <end position="11"/>
    </location>
</feature>
<feature type="helix" evidence="8">
    <location>
        <begin position="17"/>
        <end position="29"/>
    </location>
</feature>
<feature type="helix" evidence="8">
    <location>
        <begin position="30"/>
        <end position="32"/>
    </location>
</feature>
<feature type="strand" evidence="8">
    <location>
        <begin position="40"/>
        <end position="44"/>
    </location>
</feature>
<feature type="helix" evidence="8">
    <location>
        <begin position="48"/>
        <end position="51"/>
    </location>
</feature>
<feature type="strand" evidence="8">
    <location>
        <begin position="57"/>
        <end position="65"/>
    </location>
</feature>
<feature type="helix" evidence="8">
    <location>
        <begin position="66"/>
        <end position="73"/>
    </location>
</feature>
<feature type="helix" evidence="8">
    <location>
        <begin position="76"/>
        <end position="85"/>
    </location>
</feature>
<feature type="helix" evidence="8">
    <location>
        <begin position="86"/>
        <end position="88"/>
    </location>
</feature>
<feature type="strand" evidence="8">
    <location>
        <begin position="89"/>
        <end position="97"/>
    </location>
</feature>
<sequence length="101" mass="12002">MAVKHLIVLKFKDEITEAQKEEFFKTYVNLVNIIPAMKDVYWGKDVTQKNKEEGYTHIVEVTFESVETIQDYIIHPAHVGFGDVYRSFWEKLLIFDYTPRK</sequence>
<evidence type="ECO:0000250" key="1"/>
<evidence type="ECO:0000255" key="2">
    <source>
        <dbReference type="PROSITE-ProRule" id="PRU00835"/>
    </source>
</evidence>
<evidence type="ECO:0000269" key="3">
    <source>
    </source>
</evidence>
<evidence type="ECO:0000269" key="4">
    <source>
    </source>
</evidence>
<evidence type="ECO:0000303" key="5">
    <source>
    </source>
</evidence>
<evidence type="ECO:0000303" key="6">
    <source>
    </source>
</evidence>
<evidence type="ECO:0007744" key="7">
    <source>
        <dbReference type="PDB" id="5B09"/>
    </source>
</evidence>
<evidence type="ECO:0007829" key="8">
    <source>
        <dbReference type="PDB" id="5B08"/>
    </source>
</evidence>
<accession>I6WU39</accession>
<protein>
    <recommendedName>
        <fullName evidence="5">Olivetolic acid cyclase</fullName>
        <ecNumber evidence="3 4">4.4.1.26</ecNumber>
    </recommendedName>
</protein>